<reference key="1">
    <citation type="journal article" date="1997" name="Mol. Cell. Biol.">
        <title>A transcriptional mediator protein that is required for activation of many RNA polymerase II promoters and is conserved from yeast to humans.</title>
        <authorList>
            <person name="Lee Y.C."/>
            <person name="Min S."/>
            <person name="Gim B.S."/>
            <person name="Kim Y.-J."/>
        </authorList>
    </citation>
    <scope>NUCLEOTIDE SEQUENCE [MRNA]</scope>
    <scope>FUNCTION</scope>
</reference>
<reference key="2">
    <citation type="journal article" date="1994" name="Science">
        <title>Complete nucleotide sequence of Saccharomyces cerevisiae chromosome VIII.</title>
        <authorList>
            <person name="Johnston M."/>
            <person name="Andrews S."/>
            <person name="Brinkman R."/>
            <person name="Cooper J."/>
            <person name="Ding H."/>
            <person name="Dover J."/>
            <person name="Du Z."/>
            <person name="Favello A."/>
            <person name="Fulton L."/>
            <person name="Gattung S."/>
            <person name="Geisel C."/>
            <person name="Kirsten J."/>
            <person name="Kucaba T."/>
            <person name="Hillier L.W."/>
            <person name="Jier M."/>
            <person name="Johnston L."/>
            <person name="Langston Y."/>
            <person name="Latreille P."/>
            <person name="Louis E.J."/>
            <person name="Macri C."/>
            <person name="Mardis E."/>
            <person name="Menezes S."/>
            <person name="Mouser L."/>
            <person name="Nhan M."/>
            <person name="Rifkin L."/>
            <person name="Riles L."/>
            <person name="St Peter H."/>
            <person name="Trevaskis E."/>
            <person name="Vaughan K."/>
            <person name="Vignati D."/>
            <person name="Wilcox L."/>
            <person name="Wohldman P."/>
            <person name="Waterston R."/>
            <person name="Wilson R."/>
            <person name="Vaudin M."/>
        </authorList>
    </citation>
    <scope>NUCLEOTIDE SEQUENCE [LARGE SCALE GENOMIC DNA]</scope>
    <source>
        <strain>ATCC 204508 / S288c</strain>
    </source>
</reference>
<reference key="3">
    <citation type="journal article" date="2014" name="G3 (Bethesda)">
        <title>The reference genome sequence of Saccharomyces cerevisiae: Then and now.</title>
        <authorList>
            <person name="Engel S.R."/>
            <person name="Dietrich F.S."/>
            <person name="Fisk D.G."/>
            <person name="Binkley G."/>
            <person name="Balakrishnan R."/>
            <person name="Costanzo M.C."/>
            <person name="Dwight S.S."/>
            <person name="Hitz B.C."/>
            <person name="Karra K."/>
            <person name="Nash R.S."/>
            <person name="Weng S."/>
            <person name="Wong E.D."/>
            <person name="Lloyd P."/>
            <person name="Skrzypek M.S."/>
            <person name="Miyasato S.R."/>
            <person name="Simison M."/>
            <person name="Cherry J.M."/>
        </authorList>
    </citation>
    <scope>GENOME REANNOTATION</scope>
    <source>
        <strain>ATCC 204508 / S288c</strain>
    </source>
</reference>
<reference key="4">
    <citation type="journal article" date="1995" name="Proc. Natl. Acad. Sci. U.S.A.">
        <title>Yeast global transcriptional regulators Sin4 and Rgr1 are components of mediator complex/RNA polymerase II holoenzyme.</title>
        <authorList>
            <person name="Li Y."/>
            <person name="Bjoerklund S."/>
            <person name="Jiang Y.W."/>
            <person name="Kim Y.-J."/>
            <person name="Lane W.S."/>
            <person name="Stillman D.J."/>
            <person name="Kornberg R.D."/>
        </authorList>
    </citation>
    <scope>COMPONENT OF MEDIATOR COMPLEX</scope>
</reference>
<reference key="5">
    <citation type="journal article" date="1998" name="Cell">
        <title>Dissecting the regulatory circuitry of a eukaryotic genome.</title>
        <authorList>
            <person name="Holstege F.C.P."/>
            <person name="Jennings E.G."/>
            <person name="Wyrick J.J."/>
            <person name="Lee T.I."/>
            <person name="Hengartner C.J."/>
            <person name="Green M.R."/>
            <person name="Golub T.R."/>
            <person name="Lander E.S."/>
            <person name="Young R.A."/>
        </authorList>
    </citation>
    <scope>FUNCTION</scope>
</reference>
<reference key="6">
    <citation type="journal article" date="1998" name="Mol. Cell. Biol.">
        <title>Interplay of positive and negative regulators in transcription initiation by RNA polymerase II holoenzyme.</title>
        <authorList>
            <person name="Lee T.I."/>
            <person name="Wyrick J.J."/>
            <person name="Koh S.S."/>
            <person name="Jennings E.G."/>
            <person name="Gadbois E.L."/>
            <person name="Young R.A."/>
        </authorList>
    </citation>
    <scope>INTERACTION WITH SRB4</scope>
</reference>
<reference key="7">
    <citation type="journal article" date="2003" name="Nature">
        <title>Global analysis of protein localization in budding yeast.</title>
        <authorList>
            <person name="Huh W.-K."/>
            <person name="Falvo J.V."/>
            <person name="Gerke L.C."/>
            <person name="Carroll A.S."/>
            <person name="Howson R.W."/>
            <person name="Weissman J.S."/>
            <person name="O'Shea E.K."/>
        </authorList>
    </citation>
    <scope>SUBCELLULAR LOCATION [LARGE SCALE ANALYSIS]</scope>
</reference>
<reference key="8">
    <citation type="journal article" date="2003" name="Nature">
        <title>Global analysis of protein expression in yeast.</title>
        <authorList>
            <person name="Ghaemmaghami S."/>
            <person name="Huh W.-K."/>
            <person name="Bower K."/>
            <person name="Howson R.W."/>
            <person name="Belle A."/>
            <person name="Dephoure N."/>
            <person name="O'Shea E.K."/>
            <person name="Weissman J.S."/>
        </authorList>
    </citation>
    <scope>LEVEL OF PROTEIN EXPRESSION [LARGE SCALE ANALYSIS]</scope>
</reference>
<reference key="9">
    <citation type="journal article" date="2004" name="Mol. Cell">
        <title>A unified nomenclature for protein subunits of mediator complexes linking transcriptional regulators to RNA polymerase II.</title>
        <authorList>
            <person name="Bourbon H.-M."/>
            <person name="Aguilera A."/>
            <person name="Ansari A.Z."/>
            <person name="Asturias F.J."/>
            <person name="Berk A.J."/>
            <person name="Bjoerklund S."/>
            <person name="Blackwell T.K."/>
            <person name="Borggrefe T."/>
            <person name="Carey M."/>
            <person name="Carlson M."/>
            <person name="Conaway J.W."/>
            <person name="Conaway R.C."/>
            <person name="Emmons S.W."/>
            <person name="Fondell J.D."/>
            <person name="Freedman L.P."/>
            <person name="Fukasawa T."/>
            <person name="Gustafsson C.M."/>
            <person name="Han M."/>
            <person name="He X."/>
            <person name="Herman P.K."/>
            <person name="Hinnebusch A.G."/>
            <person name="Holmberg S."/>
            <person name="Holstege F.C.P."/>
            <person name="Jaehning J.A."/>
            <person name="Kim Y.-J."/>
            <person name="Kuras L."/>
            <person name="Leutz A."/>
            <person name="Lis J.T."/>
            <person name="Meisterernest M."/>
            <person name="Naeaer A.M."/>
            <person name="Nasmyth K."/>
            <person name="Parvin J.D."/>
            <person name="Ptashne M."/>
            <person name="Reinberg D."/>
            <person name="Ronne H."/>
            <person name="Sadowski I."/>
            <person name="Sakurai H."/>
            <person name="Sipiczki M."/>
            <person name="Sternberg P.W."/>
            <person name="Stillman D.J."/>
            <person name="Strich R."/>
            <person name="Struhl K."/>
            <person name="Svejstrup J.Q."/>
            <person name="Tuck S."/>
            <person name="Winston F."/>
            <person name="Roeder R.G."/>
            <person name="Kornberg R.D."/>
        </authorList>
    </citation>
    <scope>NOMENCLATURE</scope>
</reference>
<reference key="10">
    <citation type="journal article" date="2004" name="Nucleic Acids Res.">
        <title>A high resolution protein interaction map of the yeast Mediator complex.</title>
        <authorList>
            <person name="Guglielmi B."/>
            <person name="van Berkum N.L."/>
            <person name="Klapholz B."/>
            <person name="Bijma T."/>
            <person name="Boube M."/>
            <person name="Boschiero C."/>
            <person name="Bourbon H.-M."/>
            <person name="Holstege F.C.P."/>
            <person name="Werner M."/>
        </authorList>
    </citation>
    <scope>TOPOLOGY OF THE MEDIATOR COMPLEX</scope>
</reference>
<reference key="11">
    <citation type="journal article" date="2005" name="J. Biol. Chem.">
        <title>A conserved mediator hinge revealed in the structure of the MED7-MED21 (Med7-Srb7) heterodimer.</title>
        <authorList>
            <person name="Baumli S."/>
            <person name="Hoeppner S."/>
            <person name="Cramer P."/>
        </authorList>
    </citation>
    <scope>INTERACTION WITH SRB4 AND SRB7</scope>
</reference>
<reference key="12">
    <citation type="journal article" date="2005" name="J. Biol. Chem.">
        <title>Preponderance of free mediator in the yeast Saccharomyces cerevisiae.</title>
        <authorList>
            <person name="Takagi Y."/>
            <person name="Chadick J.Z."/>
            <person name="Davis J.A."/>
            <person name="Asturias F.J."/>
        </authorList>
    </citation>
    <scope>CHARACTERIZATION OF THE MEDIATOR COMPLEX</scope>
</reference>
<reference key="13">
    <citation type="journal article" date="2005" name="J. Biol. Chem.">
        <title>Mediator and TFIIH govern carboxyl-terminal domain-dependent transcription in yeast extracts.</title>
        <authorList>
            <person name="Nair D."/>
            <person name="Kim Y."/>
            <person name="Myers L.C."/>
        </authorList>
    </citation>
    <scope>FUNCTION OF THE MEDIATOR COMPLEX</scope>
</reference>
<reference key="14">
    <citation type="journal article" date="2006" name="J. Biol. Chem.">
        <title>Mediator as a general transcription factor.</title>
        <authorList>
            <person name="Takagi Y."/>
            <person name="Kornberg R.D."/>
        </authorList>
    </citation>
    <scope>FUNCTION OF THE MEDIATOR COMPLEX</scope>
</reference>
<reference key="15">
    <citation type="journal article" date="2006" name="Mol. Cell">
        <title>Head module control of mediator interactions.</title>
        <authorList>
            <person name="Takagi Y."/>
            <person name="Calero G."/>
            <person name="Komori H."/>
            <person name="Brown J.A."/>
            <person name="Ehrensberger A.H."/>
            <person name="Hudmon A."/>
            <person name="Asturias F.J."/>
            <person name="Kornberg R.D."/>
        </authorList>
    </citation>
    <scope>INTERACTION WITH SRB4</scope>
    <scope>FUNCTION OF THE MEDIATOR COMPLEX HEAD MODULE</scope>
    <scope>ELECTRON MICROSCOPY OF THE MEDIATOR COMPLEX HEAD MODULE</scope>
    <scope>INTERACTION OF THE MEDIATOR COMPLEX HEAD MODULE WITH RNA POLYMERASE II AND TFIIF</scope>
</reference>
<reference key="16">
    <citation type="journal article" date="2007" name="J. Biol. Chem.">
        <title>Med19(Rox3) regulates intermodule interactions in the Saccharomyces cerevisiae mediator complex.</title>
        <authorList>
            <person name="Baidoobonso S.M."/>
            <person name="Guidi B.W."/>
            <person name="Myers L.C."/>
        </authorList>
    </citation>
    <scope>CHARACTERIZATION OF THE MEDIATOR COMPLEX</scope>
    <scope>INTERACTION OF THE MEDIATOR COMPLEX WITH RNA POLYMERASE II</scope>
</reference>
<reference key="17">
    <citation type="journal article" date="2008" name="Mol. Cell. Proteomics">
        <title>A multidimensional chromatography technology for in-depth phosphoproteome analysis.</title>
        <authorList>
            <person name="Albuquerque C.P."/>
            <person name="Smolka M.B."/>
            <person name="Payne S.H."/>
            <person name="Bafna V."/>
            <person name="Eng J."/>
            <person name="Zhou H."/>
        </authorList>
    </citation>
    <scope>IDENTIFICATION BY MASS SPECTROMETRY [LARGE SCALE ANALYSIS]</scope>
</reference>
<reference key="18">
    <citation type="journal article" date="2009" name="Science">
        <title>Global analysis of Cdk1 substrate phosphorylation sites provides insights into evolution.</title>
        <authorList>
            <person name="Holt L.J."/>
            <person name="Tuch B.B."/>
            <person name="Villen J."/>
            <person name="Johnson A.D."/>
            <person name="Gygi S.P."/>
            <person name="Morgan D.O."/>
        </authorList>
    </citation>
    <scope>PHOSPHORYLATION [LARGE SCALE ANALYSIS] AT SER-225</scope>
    <scope>IDENTIFICATION BY MASS SPECTROMETRY [LARGE SCALE ANALYSIS]</scope>
</reference>
<reference key="19">
    <citation type="journal article" date="2002" name="Mol. Cell">
        <title>Structure of the yeast RNA polymerase II holoenzyme: mediator conformation and polymerase interaction.</title>
        <authorList>
            <person name="Davis J.A."/>
            <person name="Takagi Y."/>
            <person name="Kornberg R.D."/>
            <person name="Asturias F.J."/>
        </authorList>
    </citation>
    <scope>ELECTRON MICROSCOPY OF MEDIATOR COMPLEX IN COMPLEX WITH RNA POLYMERASE II</scope>
</reference>
<proteinExistence type="evidence at protein level"/>
<sequence>MNVTPLDELQWKSPEWIQVFGLRTENVLDYFAESPFFDKTSNNQVIKMQRQFSQLNDPNAAVNMTQNIMTLPDGKNGNLEEEFAYVDPARRQILFKYPMYMQLEEELMKLDGTEYVLSSVREPDFWVIRKQRRTNNSGVGSAKGPEIIPLQDYYIIGANIYQSPTIFKIVQSRLMSTSYHLNSTLESLYDLIEFQPSQGVHYKVPTDTSTTATAATNGNNAGGGSNKSSVRPTGGANMATVPSTTNVNMTVNTMGTGGQTIDNGTGRTGNGNMGITTEMLDKLMVTSIRSTPNYI</sequence>
<comment type="function">
    <text evidence="5 6 7 9 11">Component of the Mediator complex, a coactivator involved in the regulated transcription of nearly all RNA polymerase II-dependent genes. Mediator functions as a bridge to convey information from gene-specific regulatory proteins to the basal RNA polymerase II transcription machinery. The Mediator complex, having a compact conformation in its free form, is recruited to promoters by direct interactions with regulatory proteins and serves for the assembly of a functional preinitiation complex with RNA polymerase II and the general transcription factors. The Mediator complex unfolds to an extended conformation and partially surrounds RNA polymerase II, specifically interacting with the unphosphorylated form of the C-terminal domain (CTD) of RNA polymerase II. The Mediator complex dissociates from the RNA polymerase II holoenzyme and stays at the promoter when transcriptional elongation begins.</text>
</comment>
<comment type="subunit">
    <text evidence="4 7 8 10">Component of the Mediator complex, which is composed of at least 21 subunits that form three structurally distinct submodules. The Mediator head module contains MED6, MED8, MED11, SRB4/MED17, SRB5/MED18, ROX3/MED19, SRB2/MED20 and SRB6/MED22, the middle module contains MED1, MED4, NUT1/MED5, MED7, CSE2/MED9, NUT2/MED10, SRB7/MED21 and SOH1/MED31, and the tail module contains MED2, PGD1/MED3, RGR1/MED14, GAL11/MED15 and SIN4/MED16. The head and the middle modules interact directly with RNA polymerase II, whereas the elongated tail module interacts with gene-specific regulatory proteins. MED6 interacts directly with SRB4/MED17 and SRB7/MED21.</text>
</comment>
<comment type="interaction">
    <interactant intactId="EBI-10667">
        <id>P38782</id>
    </interactant>
    <interactant intactId="EBI-18025">
        <id>P32569</id>
        <label>SRB4</label>
    </interactant>
    <organismsDiffer>false</organismsDiffer>
    <experiments>8</experiments>
</comment>
<comment type="subcellular location">
    <subcellularLocation>
        <location evidence="2">Nucleus</location>
    </subcellularLocation>
</comment>
<comment type="miscellaneous">
    <text evidence="3">Present with 4824 molecules/cell in log phase SD medium.</text>
</comment>
<comment type="similarity">
    <text evidence="12">Belongs to the Mediator complex subunit 6 family.</text>
</comment>
<evidence type="ECO:0000256" key="1">
    <source>
        <dbReference type="SAM" id="MobiDB-lite"/>
    </source>
</evidence>
<evidence type="ECO:0000269" key="2">
    <source>
    </source>
</evidence>
<evidence type="ECO:0000269" key="3">
    <source>
    </source>
</evidence>
<evidence type="ECO:0000269" key="4">
    <source>
    </source>
</evidence>
<evidence type="ECO:0000269" key="5">
    <source>
    </source>
</evidence>
<evidence type="ECO:0000269" key="6">
    <source>
    </source>
</evidence>
<evidence type="ECO:0000269" key="7">
    <source>
    </source>
</evidence>
<evidence type="ECO:0000269" key="8">
    <source>
    </source>
</evidence>
<evidence type="ECO:0000269" key="9">
    <source>
    </source>
</evidence>
<evidence type="ECO:0000269" key="10">
    <source>
    </source>
</evidence>
<evidence type="ECO:0000269" key="11">
    <source>
    </source>
</evidence>
<evidence type="ECO:0000305" key="12"/>
<evidence type="ECO:0007744" key="13">
    <source>
    </source>
</evidence>
<accession>P38782</accession>
<accession>D3DL07</accession>
<gene>
    <name type="primary">MED6</name>
    <name type="synonym">MTR32</name>
    <name type="ordered locus">YHR058C</name>
</gene>
<protein>
    <recommendedName>
        <fullName>Mediator of RNA polymerase II transcription subunit 6</fullName>
    </recommendedName>
    <alternativeName>
        <fullName>Mediator complex subunit 6</fullName>
    </alternativeName>
</protein>
<organism>
    <name type="scientific">Saccharomyces cerevisiae (strain ATCC 204508 / S288c)</name>
    <name type="common">Baker's yeast</name>
    <dbReference type="NCBI Taxonomy" id="559292"/>
    <lineage>
        <taxon>Eukaryota</taxon>
        <taxon>Fungi</taxon>
        <taxon>Dikarya</taxon>
        <taxon>Ascomycota</taxon>
        <taxon>Saccharomycotina</taxon>
        <taxon>Saccharomycetes</taxon>
        <taxon>Saccharomycetales</taxon>
        <taxon>Saccharomycetaceae</taxon>
        <taxon>Saccharomyces</taxon>
    </lineage>
</organism>
<keyword id="KW-0002">3D-structure</keyword>
<keyword id="KW-0010">Activator</keyword>
<keyword id="KW-0539">Nucleus</keyword>
<keyword id="KW-0597">Phosphoprotein</keyword>
<keyword id="KW-1185">Reference proteome</keyword>
<keyword id="KW-0804">Transcription</keyword>
<keyword id="KW-0805">Transcription regulation</keyword>
<feature type="chain" id="PRO_0000096391" description="Mediator of RNA polymerase II transcription subunit 6">
    <location>
        <begin position="1"/>
        <end position="295"/>
    </location>
</feature>
<feature type="region of interest" description="Disordered" evidence="1">
    <location>
        <begin position="211"/>
        <end position="243"/>
    </location>
</feature>
<feature type="modified residue" description="Phosphoserine" evidence="13">
    <location>
        <position position="225"/>
    </location>
</feature>
<name>MED6_YEAST</name>
<dbReference type="EMBL" id="U78080">
    <property type="protein sequence ID" value="AAB57643.1"/>
    <property type="molecule type" value="mRNA"/>
</dbReference>
<dbReference type="EMBL" id="U00061">
    <property type="protein sequence ID" value="AAB68387.1"/>
    <property type="molecule type" value="Genomic_DNA"/>
</dbReference>
<dbReference type="EMBL" id="BK006934">
    <property type="protein sequence ID" value="DAA06751.1"/>
    <property type="molecule type" value="Genomic_DNA"/>
</dbReference>
<dbReference type="PIR" id="S46708">
    <property type="entry name" value="S46708"/>
</dbReference>
<dbReference type="RefSeq" id="NP_011925.1">
    <property type="nucleotide sequence ID" value="NM_001179188.1"/>
</dbReference>
<dbReference type="PDB" id="3J1O">
    <property type="method" value="EM"/>
    <property type="resolution" value="16.00 A"/>
    <property type="chains" value="N=166-190"/>
</dbReference>
<dbReference type="PDB" id="3RJ1">
    <property type="method" value="X-ray"/>
    <property type="resolution" value="4.30 A"/>
    <property type="chains" value="G/N/U=1-295"/>
</dbReference>
<dbReference type="PDB" id="4GWP">
    <property type="method" value="X-ray"/>
    <property type="resolution" value="4.20 A"/>
    <property type="chains" value="G=1-295"/>
</dbReference>
<dbReference type="PDB" id="4GWQ">
    <property type="method" value="X-ray"/>
    <property type="resolution" value="4.50 A"/>
    <property type="chains" value="G=1-295"/>
</dbReference>
<dbReference type="PDB" id="4V1O">
    <property type="method" value="EM"/>
    <property type="resolution" value="9.70 A"/>
    <property type="chains" value="S=1-295"/>
</dbReference>
<dbReference type="PDB" id="5OQM">
    <property type="method" value="EM"/>
    <property type="resolution" value="5.80 A"/>
    <property type="chains" value="a=1-295"/>
</dbReference>
<dbReference type="PDB" id="5SVA">
    <property type="method" value="EM"/>
    <property type="resolution" value="15.30 A"/>
    <property type="chains" value="M=1-295"/>
</dbReference>
<dbReference type="PDB" id="7UI9">
    <property type="method" value="EM"/>
    <property type="resolution" value="3.30 A"/>
    <property type="chains" value="f=1-295"/>
</dbReference>
<dbReference type="PDB" id="7UIF">
    <property type="method" value="EM"/>
    <property type="resolution" value="4.60 A"/>
    <property type="chains" value="f=1-295"/>
</dbReference>
<dbReference type="PDB" id="7UIG">
    <property type="method" value="EM"/>
    <property type="resolution" value="4.30 A"/>
    <property type="chains" value="f=1-295"/>
</dbReference>
<dbReference type="PDB" id="7UIO">
    <property type="method" value="EM"/>
    <property type="resolution" value="3.30 A"/>
    <property type="chains" value="Af/Bf=1-295"/>
</dbReference>
<dbReference type="PDB" id="8CEN">
    <property type="method" value="EM"/>
    <property type="resolution" value="3.00 A"/>
    <property type="chains" value="a=1-295"/>
</dbReference>
<dbReference type="PDB" id="8CEO">
    <property type="method" value="EM"/>
    <property type="resolution" value="3.60 A"/>
    <property type="chains" value="a=1-295"/>
</dbReference>
<dbReference type="PDBsum" id="3J1O"/>
<dbReference type="PDBsum" id="3RJ1"/>
<dbReference type="PDBsum" id="4GWP"/>
<dbReference type="PDBsum" id="4GWQ"/>
<dbReference type="PDBsum" id="4V1O"/>
<dbReference type="PDBsum" id="5OQM"/>
<dbReference type="PDBsum" id="5SVA"/>
<dbReference type="PDBsum" id="7UI9"/>
<dbReference type="PDBsum" id="7UIF"/>
<dbReference type="PDBsum" id="7UIG"/>
<dbReference type="PDBsum" id="7UIO"/>
<dbReference type="PDBsum" id="8CEN"/>
<dbReference type="PDBsum" id="8CEO"/>
<dbReference type="EMDB" id="EMD-26542"/>
<dbReference type="EMDB" id="EMD-26544"/>
<dbReference type="EMDB" id="EMD-26545"/>
<dbReference type="EMDB" id="EMD-26551"/>
<dbReference type="EMDB" id="EMD-2786"/>
<dbReference type="EMDB" id="EMD-3850"/>
<dbReference type="SMR" id="P38782"/>
<dbReference type="BioGRID" id="36490">
    <property type="interactions" value="670"/>
</dbReference>
<dbReference type="ComplexPortal" id="CPX-3226">
    <property type="entry name" value="Core mediator complex"/>
</dbReference>
<dbReference type="DIP" id="DIP-2093N"/>
<dbReference type="FunCoup" id="P38782">
    <property type="interactions" value="980"/>
</dbReference>
<dbReference type="IntAct" id="P38782">
    <property type="interactions" value="34"/>
</dbReference>
<dbReference type="MINT" id="P38782"/>
<dbReference type="STRING" id="4932.YHR058C"/>
<dbReference type="iPTMnet" id="P38782"/>
<dbReference type="PaxDb" id="4932-YHR058C"/>
<dbReference type="PeptideAtlas" id="P38782"/>
<dbReference type="EnsemblFungi" id="YHR058C_mRNA">
    <property type="protein sequence ID" value="YHR058C"/>
    <property type="gene ID" value="YHR058C"/>
</dbReference>
<dbReference type="GeneID" id="856455"/>
<dbReference type="KEGG" id="sce:YHR058C"/>
<dbReference type="AGR" id="SGD:S000001100"/>
<dbReference type="SGD" id="S000001100">
    <property type="gene designation" value="MED6"/>
</dbReference>
<dbReference type="VEuPathDB" id="FungiDB:YHR058C"/>
<dbReference type="eggNOG" id="KOG3169">
    <property type="taxonomic scope" value="Eukaryota"/>
</dbReference>
<dbReference type="GeneTree" id="ENSGT00390000017666"/>
<dbReference type="HOGENOM" id="CLU_077754_0_0_1"/>
<dbReference type="InParanoid" id="P38782"/>
<dbReference type="OMA" id="MQRQFSQ"/>
<dbReference type="OrthoDB" id="344220at2759"/>
<dbReference type="BioCyc" id="YEAST:G3O-31111-MONOMER"/>
<dbReference type="BioGRID-ORCS" id="856455">
    <property type="hits" value="4 hits in 10 CRISPR screens"/>
</dbReference>
<dbReference type="EvolutionaryTrace" id="P38782"/>
<dbReference type="PRO" id="PR:P38782"/>
<dbReference type="Proteomes" id="UP000002311">
    <property type="component" value="Chromosome VIII"/>
</dbReference>
<dbReference type="RNAct" id="P38782">
    <property type="molecule type" value="protein"/>
</dbReference>
<dbReference type="GO" id="GO:0070847">
    <property type="term" value="C:core mediator complex"/>
    <property type="evidence" value="ECO:0000314"/>
    <property type="project" value="SGD"/>
</dbReference>
<dbReference type="GO" id="GO:0016592">
    <property type="term" value="C:mediator complex"/>
    <property type="evidence" value="ECO:0000318"/>
    <property type="project" value="GO_Central"/>
</dbReference>
<dbReference type="GO" id="GO:0005634">
    <property type="term" value="C:nucleus"/>
    <property type="evidence" value="ECO:0000314"/>
    <property type="project" value="ComplexPortal"/>
</dbReference>
<dbReference type="GO" id="GO:0003713">
    <property type="term" value="F:transcription coactivator activity"/>
    <property type="evidence" value="ECO:0000314"/>
    <property type="project" value="SGD"/>
</dbReference>
<dbReference type="GO" id="GO:0045944">
    <property type="term" value="P:positive regulation of transcription by RNA polymerase II"/>
    <property type="evidence" value="ECO:0000314"/>
    <property type="project" value="SGD"/>
</dbReference>
<dbReference type="GO" id="GO:0032968">
    <property type="term" value="P:positive regulation of transcription elongation by RNA polymerase II"/>
    <property type="evidence" value="ECO:0000314"/>
    <property type="project" value="ComplexPortal"/>
</dbReference>
<dbReference type="GO" id="GO:0060261">
    <property type="term" value="P:positive regulation of transcription initiation by RNA polymerase II"/>
    <property type="evidence" value="ECO:0000314"/>
    <property type="project" value="ComplexPortal"/>
</dbReference>
<dbReference type="GO" id="GO:0006357">
    <property type="term" value="P:regulation of transcription by RNA polymerase II"/>
    <property type="evidence" value="ECO:0000318"/>
    <property type="project" value="GO_Central"/>
</dbReference>
<dbReference type="GO" id="GO:0051123">
    <property type="term" value="P:RNA polymerase II preinitiation complex assembly"/>
    <property type="evidence" value="ECO:0000314"/>
    <property type="project" value="ComplexPortal"/>
</dbReference>
<dbReference type="Gene3D" id="3.10.450.580">
    <property type="entry name" value="Mediator complex, subunit Med6"/>
    <property type="match status" value="1"/>
</dbReference>
<dbReference type="InterPro" id="IPR007018">
    <property type="entry name" value="Mediator_Med6"/>
</dbReference>
<dbReference type="InterPro" id="IPR016612">
    <property type="entry name" value="Mediator_Med6_fun"/>
</dbReference>
<dbReference type="InterPro" id="IPR038566">
    <property type="entry name" value="Mediator_Med6_sf"/>
</dbReference>
<dbReference type="PANTHER" id="PTHR13104">
    <property type="entry name" value="MED-6-RELATED"/>
    <property type="match status" value="1"/>
</dbReference>
<dbReference type="Pfam" id="PF04934">
    <property type="entry name" value="Med6"/>
    <property type="match status" value="1"/>
</dbReference>
<dbReference type="PIRSF" id="PIRSF013286">
    <property type="entry name" value="MED6_fungi"/>
    <property type="match status" value="1"/>
</dbReference>